<feature type="chain" id="PRO_0000281461" description="tRNA/tmRNA (uracil-C(5))-methyltransferase">
    <location>
        <begin position="1"/>
        <end position="365"/>
    </location>
</feature>
<feature type="active site" description="Nucleophile" evidence="1">
    <location>
        <position position="323"/>
    </location>
</feature>
<feature type="active site" description="Proton acceptor" evidence="1">
    <location>
        <position position="357"/>
    </location>
</feature>
<feature type="binding site" evidence="1">
    <location>
        <position position="189"/>
    </location>
    <ligand>
        <name>S-adenosyl-L-methionine</name>
        <dbReference type="ChEBI" id="CHEBI:59789"/>
    </ligand>
</feature>
<feature type="binding site" evidence="1">
    <location>
        <position position="217"/>
    </location>
    <ligand>
        <name>S-adenosyl-L-methionine</name>
        <dbReference type="ChEBI" id="CHEBI:59789"/>
    </ligand>
</feature>
<feature type="binding site" evidence="1">
    <location>
        <position position="222"/>
    </location>
    <ligand>
        <name>S-adenosyl-L-methionine</name>
        <dbReference type="ChEBI" id="CHEBI:59789"/>
    </ligand>
</feature>
<feature type="binding site" evidence="1">
    <location>
        <position position="238"/>
    </location>
    <ligand>
        <name>S-adenosyl-L-methionine</name>
        <dbReference type="ChEBI" id="CHEBI:59789"/>
    </ligand>
</feature>
<feature type="binding site" evidence="1">
    <location>
        <position position="298"/>
    </location>
    <ligand>
        <name>S-adenosyl-L-methionine</name>
        <dbReference type="ChEBI" id="CHEBI:59789"/>
    </ligand>
</feature>
<evidence type="ECO:0000255" key="1">
    <source>
        <dbReference type="HAMAP-Rule" id="MF_01011"/>
    </source>
</evidence>
<sequence>MNLAAMDPTTYDAQLTAKRIKLEQAFAQFETPSVEVFASEPAHYRMRAEFRVWHEGDDLYYYMFDKVLNDKVRCDQYLPASALINQMMAALITELKPNHSLRHKLFQVDFLSTLSGEILVSLLYHRQLDDQWRSEAAALKARLSSQFKVNIIGRARKQKIDLDKDFVVESLQVNDKVFHYKQIENSFTQPNAKVAIKMLEWAIDVTQNSQGDLLELYCGNGNFSIALAQNFNRVLATELAKPSVDAAQYNIEVNNIDNLQIIRMSAEEFSDAMAKKRSFRRLEGIDLDSYVCNTIFVDPPRAGIDPATLELVRGYERILYISCNPDTLKDNLQQLNQTHKVTRFALFDQFPYTDHMETGVLLERR</sequence>
<accession>A0KRK4</accession>
<protein>
    <recommendedName>
        <fullName evidence="1">tRNA/tmRNA (uracil-C(5))-methyltransferase</fullName>
        <ecNumber evidence="1">2.1.1.-</ecNumber>
        <ecNumber evidence="1">2.1.1.35</ecNumber>
    </recommendedName>
    <alternativeName>
        <fullName evidence="1">tRNA (uracil(54)-C(5))-methyltransferase</fullName>
    </alternativeName>
    <alternativeName>
        <fullName evidence="1">tRNA(m5U54)-methyltransferase</fullName>
        <shortName evidence="1">RUMT</shortName>
    </alternativeName>
    <alternativeName>
        <fullName evidence="1">tmRNA (uracil(341)-C(5))-methyltransferase</fullName>
    </alternativeName>
</protein>
<organism>
    <name type="scientific">Shewanella sp. (strain ANA-3)</name>
    <dbReference type="NCBI Taxonomy" id="94122"/>
    <lineage>
        <taxon>Bacteria</taxon>
        <taxon>Pseudomonadati</taxon>
        <taxon>Pseudomonadota</taxon>
        <taxon>Gammaproteobacteria</taxon>
        <taxon>Alteromonadales</taxon>
        <taxon>Shewanellaceae</taxon>
        <taxon>Shewanella</taxon>
    </lineage>
</organism>
<gene>
    <name evidence="1" type="primary">trmA</name>
    <name type="ordered locus">Shewana3_0179</name>
</gene>
<name>TRMA_SHESA</name>
<proteinExistence type="inferred from homology"/>
<keyword id="KW-0489">Methyltransferase</keyword>
<keyword id="KW-0949">S-adenosyl-L-methionine</keyword>
<keyword id="KW-0808">Transferase</keyword>
<keyword id="KW-0819">tRNA processing</keyword>
<reference key="1">
    <citation type="submission" date="2006-09" db="EMBL/GenBank/DDBJ databases">
        <title>Complete sequence of chromosome 1 of Shewanella sp. ANA-3.</title>
        <authorList>
            <person name="Copeland A."/>
            <person name="Lucas S."/>
            <person name="Lapidus A."/>
            <person name="Barry K."/>
            <person name="Detter J.C."/>
            <person name="Glavina del Rio T."/>
            <person name="Hammon N."/>
            <person name="Israni S."/>
            <person name="Dalin E."/>
            <person name="Tice H."/>
            <person name="Pitluck S."/>
            <person name="Chertkov O."/>
            <person name="Brettin T."/>
            <person name="Bruce D."/>
            <person name="Han C."/>
            <person name="Tapia R."/>
            <person name="Gilna P."/>
            <person name="Schmutz J."/>
            <person name="Larimer F."/>
            <person name="Land M."/>
            <person name="Hauser L."/>
            <person name="Kyrpides N."/>
            <person name="Kim E."/>
            <person name="Newman D."/>
            <person name="Salticov C."/>
            <person name="Konstantinidis K."/>
            <person name="Klappenback J."/>
            <person name="Tiedje J."/>
            <person name="Richardson P."/>
        </authorList>
    </citation>
    <scope>NUCLEOTIDE SEQUENCE [LARGE SCALE GENOMIC DNA]</scope>
    <source>
        <strain>ANA-3</strain>
    </source>
</reference>
<comment type="function">
    <text evidence="1">Dual-specificity methyltransferase that catalyzes the formation of 5-methyluridine at position 54 (m5U54) in all tRNAs, and that of position 341 (m5U341) in tmRNA (transfer-mRNA).</text>
</comment>
<comment type="catalytic activity">
    <reaction evidence="1">
        <text>uridine(54) in tRNA + S-adenosyl-L-methionine = 5-methyluridine(54) in tRNA + S-adenosyl-L-homocysteine + H(+)</text>
        <dbReference type="Rhea" id="RHEA:42712"/>
        <dbReference type="Rhea" id="RHEA-COMP:10167"/>
        <dbReference type="Rhea" id="RHEA-COMP:10193"/>
        <dbReference type="ChEBI" id="CHEBI:15378"/>
        <dbReference type="ChEBI" id="CHEBI:57856"/>
        <dbReference type="ChEBI" id="CHEBI:59789"/>
        <dbReference type="ChEBI" id="CHEBI:65315"/>
        <dbReference type="ChEBI" id="CHEBI:74447"/>
        <dbReference type="EC" id="2.1.1.35"/>
    </reaction>
</comment>
<comment type="catalytic activity">
    <reaction evidence="1">
        <text>uridine(341) in tmRNA + S-adenosyl-L-methionine = 5-methyluridine(341) in tmRNA + S-adenosyl-L-homocysteine + H(+)</text>
        <dbReference type="Rhea" id="RHEA:43612"/>
        <dbReference type="Rhea" id="RHEA-COMP:10630"/>
        <dbReference type="Rhea" id="RHEA-COMP:10631"/>
        <dbReference type="ChEBI" id="CHEBI:15378"/>
        <dbReference type="ChEBI" id="CHEBI:57856"/>
        <dbReference type="ChEBI" id="CHEBI:59789"/>
        <dbReference type="ChEBI" id="CHEBI:65315"/>
        <dbReference type="ChEBI" id="CHEBI:74447"/>
    </reaction>
</comment>
<comment type="similarity">
    <text evidence="1">Belongs to the class I-like SAM-binding methyltransferase superfamily. RNA M5U methyltransferase family. TrmA subfamily.</text>
</comment>
<dbReference type="EC" id="2.1.1.-" evidence="1"/>
<dbReference type="EC" id="2.1.1.35" evidence="1"/>
<dbReference type="EMBL" id="CP000469">
    <property type="protein sequence ID" value="ABK46423.1"/>
    <property type="molecule type" value="Genomic_DNA"/>
</dbReference>
<dbReference type="RefSeq" id="WP_011715448.1">
    <property type="nucleotide sequence ID" value="NC_008577.1"/>
</dbReference>
<dbReference type="SMR" id="A0KRK4"/>
<dbReference type="STRING" id="94122.Shewana3_0179"/>
<dbReference type="KEGG" id="shn:Shewana3_0179"/>
<dbReference type="eggNOG" id="COG2265">
    <property type="taxonomic scope" value="Bacteria"/>
</dbReference>
<dbReference type="HOGENOM" id="CLU_043022_0_0_6"/>
<dbReference type="OrthoDB" id="9804590at2"/>
<dbReference type="Proteomes" id="UP000002589">
    <property type="component" value="Chromosome"/>
</dbReference>
<dbReference type="GO" id="GO:0005829">
    <property type="term" value="C:cytosol"/>
    <property type="evidence" value="ECO:0007669"/>
    <property type="project" value="TreeGrafter"/>
</dbReference>
<dbReference type="GO" id="GO:0019843">
    <property type="term" value="F:rRNA binding"/>
    <property type="evidence" value="ECO:0007669"/>
    <property type="project" value="TreeGrafter"/>
</dbReference>
<dbReference type="GO" id="GO:0030697">
    <property type="term" value="F:tRNA (uracil(54)-C5)-methyltransferase activity, S-adenosyl methionine-dependent"/>
    <property type="evidence" value="ECO:0007669"/>
    <property type="project" value="UniProtKB-UniRule"/>
</dbReference>
<dbReference type="GO" id="GO:0000049">
    <property type="term" value="F:tRNA binding"/>
    <property type="evidence" value="ECO:0007669"/>
    <property type="project" value="TreeGrafter"/>
</dbReference>
<dbReference type="GO" id="GO:0030488">
    <property type="term" value="P:tRNA methylation"/>
    <property type="evidence" value="ECO:0007669"/>
    <property type="project" value="UniProtKB-UniRule"/>
</dbReference>
<dbReference type="CDD" id="cd02440">
    <property type="entry name" value="AdoMet_MTases"/>
    <property type="match status" value="1"/>
</dbReference>
<dbReference type="FunFam" id="2.40.50.1070:FF:000001">
    <property type="entry name" value="tRNA/tmRNA (uracil-C(5))-methyltransferase"/>
    <property type="match status" value="1"/>
</dbReference>
<dbReference type="FunFam" id="3.40.50.150:FF:000012">
    <property type="entry name" value="tRNA/tmRNA (uracil-C(5))-methyltransferase"/>
    <property type="match status" value="1"/>
</dbReference>
<dbReference type="Gene3D" id="2.40.50.1070">
    <property type="match status" value="1"/>
</dbReference>
<dbReference type="Gene3D" id="3.40.50.150">
    <property type="entry name" value="Vaccinia Virus protein VP39"/>
    <property type="match status" value="1"/>
</dbReference>
<dbReference type="HAMAP" id="MF_01011">
    <property type="entry name" value="RNA_methyltr_TrmA"/>
    <property type="match status" value="1"/>
</dbReference>
<dbReference type="InterPro" id="IPR030390">
    <property type="entry name" value="MeTrfase_TrmA_AS"/>
</dbReference>
<dbReference type="InterPro" id="IPR030391">
    <property type="entry name" value="MeTrfase_TrmA_CS"/>
</dbReference>
<dbReference type="InterPro" id="IPR029063">
    <property type="entry name" value="SAM-dependent_MTases_sf"/>
</dbReference>
<dbReference type="InterPro" id="IPR011869">
    <property type="entry name" value="TrmA_MeTrfase"/>
</dbReference>
<dbReference type="InterPro" id="IPR010280">
    <property type="entry name" value="U5_MeTrfase_fam"/>
</dbReference>
<dbReference type="NCBIfam" id="TIGR02143">
    <property type="entry name" value="trmA_only"/>
    <property type="match status" value="1"/>
</dbReference>
<dbReference type="PANTHER" id="PTHR47790">
    <property type="entry name" value="TRNA/TMRNA (URACIL-C(5))-METHYLTRANSFERASE"/>
    <property type="match status" value="1"/>
</dbReference>
<dbReference type="PANTHER" id="PTHR47790:SF2">
    <property type="entry name" value="TRNA_TMRNA (URACIL-C(5))-METHYLTRANSFERASE"/>
    <property type="match status" value="1"/>
</dbReference>
<dbReference type="Pfam" id="PF05958">
    <property type="entry name" value="tRNA_U5-meth_tr"/>
    <property type="match status" value="1"/>
</dbReference>
<dbReference type="SUPFAM" id="SSF53335">
    <property type="entry name" value="S-adenosyl-L-methionine-dependent methyltransferases"/>
    <property type="match status" value="1"/>
</dbReference>
<dbReference type="PROSITE" id="PS51687">
    <property type="entry name" value="SAM_MT_RNA_M5U"/>
    <property type="match status" value="1"/>
</dbReference>
<dbReference type="PROSITE" id="PS01230">
    <property type="entry name" value="TRMA_1"/>
    <property type="match status" value="1"/>
</dbReference>
<dbReference type="PROSITE" id="PS01231">
    <property type="entry name" value="TRMA_2"/>
    <property type="match status" value="1"/>
</dbReference>